<feature type="signal peptide" evidence="1">
    <location>
        <begin position="1"/>
        <end position="24"/>
    </location>
</feature>
<feature type="chain" id="PRO_0000023669" description="Peroxidase 3">
    <location>
        <begin position="25"/>
        <end position="326"/>
    </location>
</feature>
<feature type="active site" description="Proton acceptor" evidence="2 3">
    <location>
        <position position="66"/>
    </location>
</feature>
<feature type="binding site" evidence="2">
    <location>
        <position position="67"/>
    </location>
    <ligand>
        <name>Ca(2+)</name>
        <dbReference type="ChEBI" id="CHEBI:29108"/>
        <label>1</label>
    </ligand>
</feature>
<feature type="binding site" evidence="2">
    <location>
        <position position="70"/>
    </location>
    <ligand>
        <name>Ca(2+)</name>
        <dbReference type="ChEBI" id="CHEBI:29108"/>
        <label>1</label>
    </ligand>
</feature>
<feature type="binding site" evidence="2">
    <location>
        <position position="72"/>
    </location>
    <ligand>
        <name>Ca(2+)</name>
        <dbReference type="ChEBI" id="CHEBI:29108"/>
        <label>1</label>
    </ligand>
</feature>
<feature type="binding site" evidence="2">
    <location>
        <position position="74"/>
    </location>
    <ligand>
        <name>Ca(2+)</name>
        <dbReference type="ChEBI" id="CHEBI:29108"/>
        <label>1</label>
    </ligand>
</feature>
<feature type="binding site" evidence="2">
    <location>
        <position position="76"/>
    </location>
    <ligand>
        <name>Ca(2+)</name>
        <dbReference type="ChEBI" id="CHEBI:29108"/>
        <label>1</label>
    </ligand>
</feature>
<feature type="binding site" evidence="2">
    <location>
        <position position="161"/>
    </location>
    <ligand>
        <name>substrate</name>
    </ligand>
</feature>
<feature type="binding site" description="axial binding residue" evidence="2">
    <location>
        <position position="191"/>
    </location>
    <ligand>
        <name>heme b</name>
        <dbReference type="ChEBI" id="CHEBI:60344"/>
    </ligand>
    <ligandPart>
        <name>Fe</name>
        <dbReference type="ChEBI" id="CHEBI:18248"/>
    </ligandPart>
</feature>
<feature type="binding site" evidence="2">
    <location>
        <position position="192"/>
    </location>
    <ligand>
        <name>Ca(2+)</name>
        <dbReference type="ChEBI" id="CHEBI:29108"/>
        <label>2</label>
    </ligand>
</feature>
<feature type="binding site" evidence="2">
    <location>
        <position position="244"/>
    </location>
    <ligand>
        <name>Ca(2+)</name>
        <dbReference type="ChEBI" id="CHEBI:29108"/>
        <label>2</label>
    </ligand>
</feature>
<feature type="binding site" evidence="2">
    <location>
        <position position="247"/>
    </location>
    <ligand>
        <name>Ca(2+)</name>
        <dbReference type="ChEBI" id="CHEBI:29108"/>
        <label>2</label>
    </ligand>
</feature>
<feature type="binding site" evidence="2">
    <location>
        <position position="252"/>
    </location>
    <ligand>
        <name>Ca(2+)</name>
        <dbReference type="ChEBI" id="CHEBI:29108"/>
        <label>2</label>
    </ligand>
</feature>
<feature type="site" description="Transition state stabilizer" evidence="2">
    <location>
        <position position="62"/>
    </location>
</feature>
<feature type="glycosylation site" description="N-linked (GlcNAc...) asparagine" evidence="1">
    <location>
        <position position="80"/>
    </location>
</feature>
<feature type="glycosylation site" description="N-linked (GlcNAc...) asparagine" evidence="1">
    <location>
        <position position="138"/>
    </location>
</feature>
<feature type="glycosylation site" description="N-linked (GlcNAc...) asparagine" evidence="1">
    <location>
        <position position="166"/>
    </location>
</feature>
<feature type="glycosylation site" description="N-linked (GlcNAc...) asparagine" evidence="1">
    <location>
        <position position="207"/>
    </location>
</feature>
<feature type="glycosylation site" description="N-linked (GlcNAc...) asparagine" evidence="1">
    <location>
        <position position="237"/>
    </location>
</feature>
<feature type="disulfide bond" evidence="2">
    <location>
        <begin position="35"/>
        <end position="113"/>
    </location>
</feature>
<feature type="disulfide bond" evidence="2">
    <location>
        <begin position="68"/>
        <end position="73"/>
    </location>
</feature>
<feature type="disulfide bond" evidence="2">
    <location>
        <begin position="119"/>
        <end position="321"/>
    </location>
</feature>
<feature type="disulfide bond" evidence="2">
    <location>
        <begin position="198"/>
        <end position="231"/>
    </location>
</feature>
<feature type="sequence conflict" description="In Ref. 5; AAM61240." evidence="4" ref="5">
    <original>I</original>
    <variation>M</variation>
    <location>
        <position position="18"/>
    </location>
</feature>
<protein>
    <recommendedName>
        <fullName>Peroxidase 3</fullName>
        <shortName>Atperox P3</shortName>
        <ecNumber>1.11.1.7</ecNumber>
    </recommendedName>
    <alternativeName>
        <fullName>ATPRC</fullName>
    </alternativeName>
    <alternativeName>
        <fullName>RCI3A</fullName>
    </alternativeName>
    <alternativeName>
        <fullName>Rare cold-inducible protein</fullName>
    </alternativeName>
</protein>
<comment type="function">
    <text>Removal of H(2)O(2), oxidation of toxic reductants, biosynthesis and degradation of lignin, suberization, auxin catabolism, response to environmental stresses such as wounding, pathogen attack and oxidative stress. These functions might be dependent on each isozyme/isoform in each plant tissue.</text>
</comment>
<comment type="catalytic activity">
    <reaction>
        <text>2 a phenolic donor + H2O2 = 2 a phenolic radical donor + 2 H2O</text>
        <dbReference type="Rhea" id="RHEA:56136"/>
        <dbReference type="ChEBI" id="CHEBI:15377"/>
        <dbReference type="ChEBI" id="CHEBI:16240"/>
        <dbReference type="ChEBI" id="CHEBI:139520"/>
        <dbReference type="ChEBI" id="CHEBI:139521"/>
        <dbReference type="EC" id="1.11.1.7"/>
    </reaction>
</comment>
<comment type="cofactor">
    <cofactor evidence="2">
        <name>heme b</name>
        <dbReference type="ChEBI" id="CHEBI:60344"/>
    </cofactor>
    <text evidence="2">Binds 1 heme b (iron(II)-protoporphyrin IX) group per subunit.</text>
</comment>
<comment type="cofactor">
    <cofactor evidence="2">
        <name>Ca(2+)</name>
        <dbReference type="ChEBI" id="CHEBI:29108"/>
    </cofactor>
    <text evidence="2">Binds 2 calcium ions per subunit.</text>
</comment>
<comment type="subcellular location">
    <subcellularLocation>
        <location evidence="2">Secreted</location>
    </subcellularLocation>
</comment>
<comment type="tissue specificity">
    <text>Expressed in root cells.</text>
</comment>
<comment type="induction">
    <text>Up-regulated by cold temperatures and down-regulated by light. In response to low temperatures, transcripts accumulate in the whole etiolated seedlings but only in roots of light-grown seedlings.</text>
</comment>
<comment type="miscellaneous">
    <text>There are 73 peroxidase genes in A.thaliana.</text>
</comment>
<comment type="similarity">
    <text evidence="2">Belongs to the peroxidase family. Classical plant (class III) peroxidase subfamily.</text>
</comment>
<gene>
    <name type="primary">PER3</name>
    <name type="synonym">P3</name>
    <name type="synonym">RCI3</name>
    <name type="ordered locus">At1g05260</name>
    <name type="ORF">YUP8H12.13</name>
</gene>
<keyword id="KW-0106">Calcium</keyword>
<keyword id="KW-1015">Disulfide bond</keyword>
<keyword id="KW-0325">Glycoprotein</keyword>
<keyword id="KW-0349">Heme</keyword>
<keyword id="KW-0376">Hydrogen peroxide</keyword>
<keyword id="KW-0408">Iron</keyword>
<keyword id="KW-0479">Metal-binding</keyword>
<keyword id="KW-0560">Oxidoreductase</keyword>
<keyword id="KW-0575">Peroxidase</keyword>
<keyword id="KW-1185">Reference proteome</keyword>
<keyword id="KW-0964">Secreted</keyword>
<keyword id="KW-0732">Signal</keyword>
<sequence>MNCLIAIALSVSFFLVGIVGPIQAQLQMNFYANSCPNAEKIVQDFVSNHVSNAPSLAAALIRMHFHDCFVRGCDGSVLINSTSGNAERDATPNLTVRGFGFIDAIKSVLEAQCPGIVSCADIIALASRDAVVFTGGPNWSVPTGRRDGRISNAAEALANIPPPTSNITNLQTLFANQGLDLKDLVLLSGAHTIGVSHCSSFTNRLYNFTGRGGQDPALDSEYAANLKSRKCPSLNDNKTIVEMDPGSRKTFDLSYYQLVLKRRGLFQSDSALTTNPTTLSNINRILTGSVGSFFSEFAKSMEKMGRINVKTGSAGVVRRQCSVANS</sequence>
<name>PER3_ARATH</name>
<evidence type="ECO:0000255" key="1"/>
<evidence type="ECO:0000255" key="2">
    <source>
        <dbReference type="PROSITE-ProRule" id="PRU00297"/>
    </source>
</evidence>
<evidence type="ECO:0000255" key="3">
    <source>
        <dbReference type="PROSITE-ProRule" id="PRU10012"/>
    </source>
</evidence>
<evidence type="ECO:0000305" key="4"/>
<accession>O23044</accession>
<organism>
    <name type="scientific">Arabidopsis thaliana</name>
    <name type="common">Mouse-ear cress</name>
    <dbReference type="NCBI Taxonomy" id="3702"/>
    <lineage>
        <taxon>Eukaryota</taxon>
        <taxon>Viridiplantae</taxon>
        <taxon>Streptophyta</taxon>
        <taxon>Embryophyta</taxon>
        <taxon>Tracheophyta</taxon>
        <taxon>Spermatophyta</taxon>
        <taxon>Magnoliopsida</taxon>
        <taxon>eudicotyledons</taxon>
        <taxon>Gunneridae</taxon>
        <taxon>Pentapetalae</taxon>
        <taxon>rosids</taxon>
        <taxon>malvids</taxon>
        <taxon>Brassicales</taxon>
        <taxon>Brassicaceae</taxon>
        <taxon>Camelineae</taxon>
        <taxon>Arabidopsis</taxon>
    </lineage>
</organism>
<dbReference type="EC" id="1.11.1.7"/>
<dbReference type="EMBL" id="U97684">
    <property type="protein sequence ID" value="AAB94661.1"/>
    <property type="molecule type" value="mRNA"/>
</dbReference>
<dbReference type="EMBL" id="AC000098">
    <property type="protein sequence ID" value="AAB71452.1"/>
    <property type="molecule type" value="Genomic_DNA"/>
</dbReference>
<dbReference type="EMBL" id="CP002684">
    <property type="protein sequence ID" value="AEE27815.1"/>
    <property type="molecule type" value="Genomic_DNA"/>
</dbReference>
<dbReference type="EMBL" id="BT004817">
    <property type="protein sequence ID" value="AAO44083.1"/>
    <property type="molecule type" value="mRNA"/>
</dbReference>
<dbReference type="EMBL" id="AY084678">
    <property type="protein sequence ID" value="AAM61240.1"/>
    <property type="molecule type" value="mRNA"/>
</dbReference>
<dbReference type="PIR" id="B86187">
    <property type="entry name" value="B86187"/>
</dbReference>
<dbReference type="RefSeq" id="NP_172018.1">
    <property type="nucleotide sequence ID" value="NM_100405.4"/>
</dbReference>
<dbReference type="SMR" id="O23044"/>
<dbReference type="BioGRID" id="22270">
    <property type="interactions" value="1"/>
</dbReference>
<dbReference type="FunCoup" id="O23044">
    <property type="interactions" value="187"/>
</dbReference>
<dbReference type="IntAct" id="O23044">
    <property type="interactions" value="1"/>
</dbReference>
<dbReference type="STRING" id="3702.O23044"/>
<dbReference type="PeroxiBase" id="79">
    <property type="entry name" value="AtPrx03"/>
</dbReference>
<dbReference type="GlyCosmos" id="O23044">
    <property type="glycosylation" value="5 sites, No reported glycans"/>
</dbReference>
<dbReference type="GlyGen" id="O23044">
    <property type="glycosylation" value="5 sites"/>
</dbReference>
<dbReference type="iPTMnet" id="O23044"/>
<dbReference type="PaxDb" id="3702-AT1G05260.1"/>
<dbReference type="ProteomicsDB" id="236397"/>
<dbReference type="EnsemblPlants" id="AT1G05260.1">
    <property type="protein sequence ID" value="AT1G05260.1"/>
    <property type="gene ID" value="AT1G05260"/>
</dbReference>
<dbReference type="GeneID" id="837028"/>
<dbReference type="Gramene" id="AT1G05260.1">
    <property type="protein sequence ID" value="AT1G05260.1"/>
    <property type="gene ID" value="AT1G05260"/>
</dbReference>
<dbReference type="KEGG" id="ath:AT1G05260"/>
<dbReference type="Araport" id="AT1G05260"/>
<dbReference type="TAIR" id="AT1G05260">
    <property type="gene designation" value="RCI3"/>
</dbReference>
<dbReference type="eggNOG" id="ENOG502QRTP">
    <property type="taxonomic scope" value="Eukaryota"/>
</dbReference>
<dbReference type="HOGENOM" id="CLU_010543_0_3_1"/>
<dbReference type="InParanoid" id="O23044"/>
<dbReference type="OMA" id="RLFNNQG"/>
<dbReference type="PhylomeDB" id="O23044"/>
<dbReference type="BioCyc" id="ARA:AT1G05260-MONOMER"/>
<dbReference type="PRO" id="PR:O23044"/>
<dbReference type="Proteomes" id="UP000006548">
    <property type="component" value="Chromosome 1"/>
</dbReference>
<dbReference type="ExpressionAtlas" id="O23044">
    <property type="expression patterns" value="baseline and differential"/>
</dbReference>
<dbReference type="GO" id="GO:0005783">
    <property type="term" value="C:endoplasmic reticulum"/>
    <property type="evidence" value="ECO:0000250"/>
    <property type="project" value="TAIR"/>
</dbReference>
<dbReference type="GO" id="GO:0005576">
    <property type="term" value="C:extracellular region"/>
    <property type="evidence" value="ECO:0007669"/>
    <property type="project" value="UniProtKB-SubCell"/>
</dbReference>
<dbReference type="GO" id="GO:0020037">
    <property type="term" value="F:heme binding"/>
    <property type="evidence" value="ECO:0007669"/>
    <property type="project" value="InterPro"/>
</dbReference>
<dbReference type="GO" id="GO:0140825">
    <property type="term" value="F:lactoperoxidase activity"/>
    <property type="evidence" value="ECO:0007669"/>
    <property type="project" value="UniProtKB-EC"/>
</dbReference>
<dbReference type="GO" id="GO:0046872">
    <property type="term" value="F:metal ion binding"/>
    <property type="evidence" value="ECO:0007669"/>
    <property type="project" value="UniProtKB-KW"/>
</dbReference>
<dbReference type="GO" id="GO:0004601">
    <property type="term" value="F:peroxidase activity"/>
    <property type="evidence" value="ECO:0000314"/>
    <property type="project" value="TAIR"/>
</dbReference>
<dbReference type="GO" id="GO:0042744">
    <property type="term" value="P:hydrogen peroxide catabolic process"/>
    <property type="evidence" value="ECO:0007669"/>
    <property type="project" value="UniProtKB-KW"/>
</dbReference>
<dbReference type="GO" id="GO:0042538">
    <property type="term" value="P:hyperosmotic salinity response"/>
    <property type="evidence" value="ECO:0000315"/>
    <property type="project" value="TAIR"/>
</dbReference>
<dbReference type="GO" id="GO:0009409">
    <property type="term" value="P:response to cold"/>
    <property type="evidence" value="ECO:0000270"/>
    <property type="project" value="TAIR"/>
</dbReference>
<dbReference type="GO" id="GO:0009269">
    <property type="term" value="P:response to desiccation"/>
    <property type="evidence" value="ECO:0000315"/>
    <property type="project" value="TAIR"/>
</dbReference>
<dbReference type="GO" id="GO:0006979">
    <property type="term" value="P:response to oxidative stress"/>
    <property type="evidence" value="ECO:0007669"/>
    <property type="project" value="InterPro"/>
</dbReference>
<dbReference type="CDD" id="cd00693">
    <property type="entry name" value="secretory_peroxidase"/>
    <property type="match status" value="1"/>
</dbReference>
<dbReference type="FunFam" id="1.10.420.10:FF:000008">
    <property type="entry name" value="Peroxidase"/>
    <property type="match status" value="1"/>
</dbReference>
<dbReference type="FunFam" id="1.10.520.10:FF:000001">
    <property type="entry name" value="Peroxidase"/>
    <property type="match status" value="1"/>
</dbReference>
<dbReference type="Gene3D" id="1.10.520.10">
    <property type="match status" value="1"/>
</dbReference>
<dbReference type="Gene3D" id="1.10.420.10">
    <property type="entry name" value="Peroxidase, domain 2"/>
    <property type="match status" value="1"/>
</dbReference>
<dbReference type="InterPro" id="IPR002016">
    <property type="entry name" value="Haem_peroxidase"/>
</dbReference>
<dbReference type="InterPro" id="IPR010255">
    <property type="entry name" value="Haem_peroxidase_sf"/>
</dbReference>
<dbReference type="InterPro" id="IPR000823">
    <property type="entry name" value="Peroxidase_pln"/>
</dbReference>
<dbReference type="InterPro" id="IPR019794">
    <property type="entry name" value="Peroxidases_AS"/>
</dbReference>
<dbReference type="InterPro" id="IPR019793">
    <property type="entry name" value="Peroxidases_heam-ligand_BS"/>
</dbReference>
<dbReference type="InterPro" id="IPR033905">
    <property type="entry name" value="Secretory_peroxidase"/>
</dbReference>
<dbReference type="PANTHER" id="PTHR31235">
    <property type="entry name" value="PEROXIDASE 25-RELATED"/>
    <property type="match status" value="1"/>
</dbReference>
<dbReference type="Pfam" id="PF00141">
    <property type="entry name" value="peroxidase"/>
    <property type="match status" value="1"/>
</dbReference>
<dbReference type="PRINTS" id="PR00458">
    <property type="entry name" value="PEROXIDASE"/>
</dbReference>
<dbReference type="PRINTS" id="PR00461">
    <property type="entry name" value="PLPEROXIDASE"/>
</dbReference>
<dbReference type="SUPFAM" id="SSF48113">
    <property type="entry name" value="Heme-dependent peroxidases"/>
    <property type="match status" value="1"/>
</dbReference>
<dbReference type="PROSITE" id="PS00435">
    <property type="entry name" value="PEROXIDASE_1"/>
    <property type="match status" value="1"/>
</dbReference>
<dbReference type="PROSITE" id="PS00436">
    <property type="entry name" value="PEROXIDASE_2"/>
    <property type="match status" value="1"/>
</dbReference>
<dbReference type="PROSITE" id="PS50873">
    <property type="entry name" value="PEROXIDASE_4"/>
    <property type="match status" value="1"/>
</dbReference>
<reference key="1">
    <citation type="journal article" date="2002" name="Plant J.">
        <title>A novel cold-inducible gene from Arabidopsis, RCI3, encodes a peroxidase that constitutes a component for stress tolerance.</title>
        <authorList>
            <person name="Llorente F."/>
            <person name="Lopez-Cobollo R.M."/>
            <person name="Catala R."/>
            <person name="Martinez-Zapater J.M."/>
            <person name="Salinas J."/>
        </authorList>
    </citation>
    <scope>NUCLEOTIDE SEQUENCE [MRNA]</scope>
    <source>
        <strain>cv. Columbia</strain>
        <tissue>Etiolated seedling</tissue>
    </source>
</reference>
<reference key="2">
    <citation type="journal article" date="2000" name="Nature">
        <title>Sequence and analysis of chromosome 1 of the plant Arabidopsis thaliana.</title>
        <authorList>
            <person name="Theologis A."/>
            <person name="Ecker J.R."/>
            <person name="Palm C.J."/>
            <person name="Federspiel N.A."/>
            <person name="Kaul S."/>
            <person name="White O."/>
            <person name="Alonso J."/>
            <person name="Altafi H."/>
            <person name="Araujo R."/>
            <person name="Bowman C.L."/>
            <person name="Brooks S.Y."/>
            <person name="Buehler E."/>
            <person name="Chan A."/>
            <person name="Chao Q."/>
            <person name="Chen H."/>
            <person name="Cheuk R.F."/>
            <person name="Chin C.W."/>
            <person name="Chung M.K."/>
            <person name="Conn L."/>
            <person name="Conway A.B."/>
            <person name="Conway A.R."/>
            <person name="Creasy T.H."/>
            <person name="Dewar K."/>
            <person name="Dunn P."/>
            <person name="Etgu P."/>
            <person name="Feldblyum T.V."/>
            <person name="Feng J.-D."/>
            <person name="Fong B."/>
            <person name="Fujii C.Y."/>
            <person name="Gill J.E."/>
            <person name="Goldsmith A.D."/>
            <person name="Haas B."/>
            <person name="Hansen N.F."/>
            <person name="Hughes B."/>
            <person name="Huizar L."/>
            <person name="Hunter J.L."/>
            <person name="Jenkins J."/>
            <person name="Johnson-Hopson C."/>
            <person name="Khan S."/>
            <person name="Khaykin E."/>
            <person name="Kim C.J."/>
            <person name="Koo H.L."/>
            <person name="Kremenetskaia I."/>
            <person name="Kurtz D.B."/>
            <person name="Kwan A."/>
            <person name="Lam B."/>
            <person name="Langin-Hooper S."/>
            <person name="Lee A."/>
            <person name="Lee J.M."/>
            <person name="Lenz C.A."/>
            <person name="Li J.H."/>
            <person name="Li Y.-P."/>
            <person name="Lin X."/>
            <person name="Liu S.X."/>
            <person name="Liu Z.A."/>
            <person name="Luros J.S."/>
            <person name="Maiti R."/>
            <person name="Marziali A."/>
            <person name="Militscher J."/>
            <person name="Miranda M."/>
            <person name="Nguyen M."/>
            <person name="Nierman W.C."/>
            <person name="Osborne B.I."/>
            <person name="Pai G."/>
            <person name="Peterson J."/>
            <person name="Pham P.K."/>
            <person name="Rizzo M."/>
            <person name="Rooney T."/>
            <person name="Rowley D."/>
            <person name="Sakano H."/>
            <person name="Salzberg S.L."/>
            <person name="Schwartz J.R."/>
            <person name="Shinn P."/>
            <person name="Southwick A.M."/>
            <person name="Sun H."/>
            <person name="Tallon L.J."/>
            <person name="Tambunga G."/>
            <person name="Toriumi M.J."/>
            <person name="Town C.D."/>
            <person name="Utterback T."/>
            <person name="Van Aken S."/>
            <person name="Vaysberg M."/>
            <person name="Vysotskaia V.S."/>
            <person name="Walker M."/>
            <person name="Wu D."/>
            <person name="Yu G."/>
            <person name="Fraser C.M."/>
            <person name="Venter J.C."/>
            <person name="Davis R.W."/>
        </authorList>
    </citation>
    <scope>NUCLEOTIDE SEQUENCE [LARGE SCALE GENOMIC DNA]</scope>
    <source>
        <strain>cv. Columbia</strain>
    </source>
</reference>
<reference key="3">
    <citation type="journal article" date="2017" name="Plant J.">
        <title>Araport11: a complete reannotation of the Arabidopsis thaliana reference genome.</title>
        <authorList>
            <person name="Cheng C.Y."/>
            <person name="Krishnakumar V."/>
            <person name="Chan A.P."/>
            <person name="Thibaud-Nissen F."/>
            <person name="Schobel S."/>
            <person name="Town C.D."/>
        </authorList>
    </citation>
    <scope>GENOME REANNOTATION</scope>
    <source>
        <strain>cv. Columbia</strain>
    </source>
</reference>
<reference key="4">
    <citation type="journal article" date="2003" name="Science">
        <title>Empirical analysis of transcriptional activity in the Arabidopsis genome.</title>
        <authorList>
            <person name="Yamada K."/>
            <person name="Lim J."/>
            <person name="Dale J.M."/>
            <person name="Chen H."/>
            <person name="Shinn P."/>
            <person name="Palm C.J."/>
            <person name="Southwick A.M."/>
            <person name="Wu H.C."/>
            <person name="Kim C.J."/>
            <person name="Nguyen M."/>
            <person name="Pham P.K."/>
            <person name="Cheuk R.F."/>
            <person name="Karlin-Newmann G."/>
            <person name="Liu S.X."/>
            <person name="Lam B."/>
            <person name="Sakano H."/>
            <person name="Wu T."/>
            <person name="Yu G."/>
            <person name="Miranda M."/>
            <person name="Quach H.L."/>
            <person name="Tripp M."/>
            <person name="Chang C.H."/>
            <person name="Lee J.M."/>
            <person name="Toriumi M.J."/>
            <person name="Chan M.M."/>
            <person name="Tang C.C."/>
            <person name="Onodera C.S."/>
            <person name="Deng J.M."/>
            <person name="Akiyama K."/>
            <person name="Ansari Y."/>
            <person name="Arakawa T."/>
            <person name="Banh J."/>
            <person name="Banno F."/>
            <person name="Bowser L."/>
            <person name="Brooks S.Y."/>
            <person name="Carninci P."/>
            <person name="Chao Q."/>
            <person name="Choy N."/>
            <person name="Enju A."/>
            <person name="Goldsmith A.D."/>
            <person name="Gurjal M."/>
            <person name="Hansen N.F."/>
            <person name="Hayashizaki Y."/>
            <person name="Johnson-Hopson C."/>
            <person name="Hsuan V.W."/>
            <person name="Iida K."/>
            <person name="Karnes M."/>
            <person name="Khan S."/>
            <person name="Koesema E."/>
            <person name="Ishida J."/>
            <person name="Jiang P.X."/>
            <person name="Jones T."/>
            <person name="Kawai J."/>
            <person name="Kamiya A."/>
            <person name="Meyers C."/>
            <person name="Nakajima M."/>
            <person name="Narusaka M."/>
            <person name="Seki M."/>
            <person name="Sakurai T."/>
            <person name="Satou M."/>
            <person name="Tamse R."/>
            <person name="Vaysberg M."/>
            <person name="Wallender E.K."/>
            <person name="Wong C."/>
            <person name="Yamamura Y."/>
            <person name="Yuan S."/>
            <person name="Shinozaki K."/>
            <person name="Davis R.W."/>
            <person name="Theologis A."/>
            <person name="Ecker J.R."/>
        </authorList>
    </citation>
    <scope>NUCLEOTIDE SEQUENCE [LARGE SCALE MRNA]</scope>
    <source>
        <strain>cv. Columbia</strain>
    </source>
</reference>
<reference key="5">
    <citation type="submission" date="2002-03" db="EMBL/GenBank/DDBJ databases">
        <title>Full-length cDNA from Arabidopsis thaliana.</title>
        <authorList>
            <person name="Brover V.V."/>
            <person name="Troukhan M.E."/>
            <person name="Alexandrov N.A."/>
            <person name="Lu Y.-P."/>
            <person name="Flavell R.B."/>
            <person name="Feldmann K.A."/>
        </authorList>
    </citation>
    <scope>NUCLEOTIDE SEQUENCE [LARGE SCALE MRNA]</scope>
</reference>
<reference key="6">
    <citation type="journal article" date="2002" name="Gene">
        <title>Analysis and expression of the class III peroxidase large gene family in Arabidopsis thaliana.</title>
        <authorList>
            <person name="Tognolli M."/>
            <person name="Penel C."/>
            <person name="Greppin H."/>
            <person name="Simon P."/>
        </authorList>
    </citation>
    <scope>GENE FAMILY ORGANIZATION</scope>
    <scope>NOMENCLATURE</scope>
    <source>
        <strain>cv. Columbia</strain>
    </source>
</reference>
<proteinExistence type="evidence at transcript level"/>